<proteinExistence type="inferred from homology"/>
<comment type="cofactor">
    <cofactor evidence="1">
        <name>Zn(2+)</name>
        <dbReference type="ChEBI" id="CHEBI:29105"/>
    </cofactor>
    <text evidence="1">Binds 1 zinc ion per subunit.</text>
</comment>
<comment type="subcellular location">
    <subcellularLocation>
        <location evidence="1">Cell inner membrane</location>
        <topology evidence="1">Multi-pass membrane protein</topology>
    </subcellularLocation>
</comment>
<comment type="similarity">
    <text evidence="1">Belongs to the peptidase M48B family.</text>
</comment>
<feature type="chain" id="PRO_1000058462" description="Protease HtpX">
    <location>
        <begin position="1"/>
        <end position="293"/>
    </location>
</feature>
<feature type="transmembrane region" description="Helical" evidence="1">
    <location>
        <begin position="4"/>
        <end position="24"/>
    </location>
</feature>
<feature type="transmembrane region" description="Helical" evidence="1">
    <location>
        <begin position="34"/>
        <end position="54"/>
    </location>
</feature>
<feature type="transmembrane region" description="Helical" evidence="1">
    <location>
        <begin position="158"/>
        <end position="178"/>
    </location>
</feature>
<feature type="transmembrane region" description="Helical" evidence="1">
    <location>
        <begin position="193"/>
        <end position="213"/>
    </location>
</feature>
<feature type="active site" evidence="1">
    <location>
        <position position="140"/>
    </location>
</feature>
<feature type="binding site" evidence="1">
    <location>
        <position position="139"/>
    </location>
    <ligand>
        <name>Zn(2+)</name>
        <dbReference type="ChEBI" id="CHEBI:29105"/>
        <note>catalytic</note>
    </ligand>
</feature>
<feature type="binding site" evidence="1">
    <location>
        <position position="143"/>
    </location>
    <ligand>
        <name>Zn(2+)</name>
        <dbReference type="ChEBI" id="CHEBI:29105"/>
        <note>catalytic</note>
    </ligand>
</feature>
<feature type="binding site" evidence="1">
    <location>
        <position position="222"/>
    </location>
    <ligand>
        <name>Zn(2+)</name>
        <dbReference type="ChEBI" id="CHEBI:29105"/>
        <note>catalytic</note>
    </ligand>
</feature>
<protein>
    <recommendedName>
        <fullName evidence="1">Protease HtpX</fullName>
        <ecNumber evidence="1">3.4.24.-</ecNumber>
    </recommendedName>
    <alternativeName>
        <fullName evidence="1">Heat shock protein HtpX</fullName>
    </alternativeName>
</protein>
<dbReference type="EC" id="3.4.24.-" evidence="1"/>
<dbReference type="EMBL" id="CP000800">
    <property type="protein sequence ID" value="ABV17740.1"/>
    <property type="molecule type" value="Genomic_DNA"/>
</dbReference>
<dbReference type="RefSeq" id="WP_000984517.1">
    <property type="nucleotide sequence ID" value="NC_009801.1"/>
</dbReference>
<dbReference type="SMR" id="A7ZMV2"/>
<dbReference type="MEROPS" id="M48.002"/>
<dbReference type="GeneID" id="93776079"/>
<dbReference type="KEGG" id="ecw:EcE24377A_2058"/>
<dbReference type="HOGENOM" id="CLU_042266_1_0_6"/>
<dbReference type="Proteomes" id="UP000001122">
    <property type="component" value="Chromosome"/>
</dbReference>
<dbReference type="GO" id="GO:0005886">
    <property type="term" value="C:plasma membrane"/>
    <property type="evidence" value="ECO:0007669"/>
    <property type="project" value="UniProtKB-SubCell"/>
</dbReference>
<dbReference type="GO" id="GO:0004222">
    <property type="term" value="F:metalloendopeptidase activity"/>
    <property type="evidence" value="ECO:0007669"/>
    <property type="project" value="UniProtKB-UniRule"/>
</dbReference>
<dbReference type="GO" id="GO:0008270">
    <property type="term" value="F:zinc ion binding"/>
    <property type="evidence" value="ECO:0007669"/>
    <property type="project" value="UniProtKB-UniRule"/>
</dbReference>
<dbReference type="GO" id="GO:0006508">
    <property type="term" value="P:proteolysis"/>
    <property type="evidence" value="ECO:0007669"/>
    <property type="project" value="UniProtKB-KW"/>
</dbReference>
<dbReference type="CDD" id="cd07335">
    <property type="entry name" value="M48B_HtpX_like"/>
    <property type="match status" value="1"/>
</dbReference>
<dbReference type="FunFam" id="3.30.2010.10:FF:000001">
    <property type="entry name" value="Protease HtpX"/>
    <property type="match status" value="1"/>
</dbReference>
<dbReference type="Gene3D" id="3.30.2010.10">
    <property type="entry name" value="Metalloproteases ('zincins'), catalytic domain"/>
    <property type="match status" value="1"/>
</dbReference>
<dbReference type="HAMAP" id="MF_00188">
    <property type="entry name" value="Pept_M48_protease_HtpX"/>
    <property type="match status" value="1"/>
</dbReference>
<dbReference type="InterPro" id="IPR050083">
    <property type="entry name" value="HtpX_protease"/>
</dbReference>
<dbReference type="InterPro" id="IPR022919">
    <property type="entry name" value="Pept_M48_protease_HtpX"/>
</dbReference>
<dbReference type="InterPro" id="IPR001915">
    <property type="entry name" value="Peptidase_M48"/>
</dbReference>
<dbReference type="NCBIfam" id="NF003965">
    <property type="entry name" value="PRK05457.1"/>
    <property type="match status" value="1"/>
</dbReference>
<dbReference type="PANTHER" id="PTHR43221">
    <property type="entry name" value="PROTEASE HTPX"/>
    <property type="match status" value="1"/>
</dbReference>
<dbReference type="PANTHER" id="PTHR43221:SF1">
    <property type="entry name" value="PROTEASE HTPX"/>
    <property type="match status" value="1"/>
</dbReference>
<dbReference type="Pfam" id="PF01435">
    <property type="entry name" value="Peptidase_M48"/>
    <property type="match status" value="1"/>
</dbReference>
<sequence>MMRIALFLLTNLAVMVVFGLVLSLTGIQSSSVQGLMIMALLFGFGGSFVSLLMSKWMALRSVGGEVIEQPRNERERWLVNTVATQARQAGIAMPQVAIYHAPDINAFATGARRDASLVAVSTGLLQNMSPDEAEAVIAHEISHIANGDMVTMTLIQGVVNTFVIFISRILAQLAAGFMGGNRDEGEESNGNPLIYFAVATVLELVFGILASIITMWFSRHREFHADAGSAKLVGREKMIAALQRLKTSYEPQEATSMMAFCINGKSKSLSELFMTHPPLDKRIEALRTGEYLK</sequence>
<name>HTPX_ECO24</name>
<gene>
    <name evidence="1" type="primary">htpX</name>
    <name type="ordered locus">EcE24377A_2058</name>
</gene>
<reference key="1">
    <citation type="journal article" date="2008" name="J. Bacteriol.">
        <title>The pangenome structure of Escherichia coli: comparative genomic analysis of E. coli commensal and pathogenic isolates.</title>
        <authorList>
            <person name="Rasko D.A."/>
            <person name="Rosovitz M.J."/>
            <person name="Myers G.S.A."/>
            <person name="Mongodin E.F."/>
            <person name="Fricke W.F."/>
            <person name="Gajer P."/>
            <person name="Crabtree J."/>
            <person name="Sebaihia M."/>
            <person name="Thomson N.R."/>
            <person name="Chaudhuri R."/>
            <person name="Henderson I.R."/>
            <person name="Sperandio V."/>
            <person name="Ravel J."/>
        </authorList>
    </citation>
    <scope>NUCLEOTIDE SEQUENCE [LARGE SCALE GENOMIC DNA]</scope>
    <source>
        <strain>E24377A / ETEC</strain>
    </source>
</reference>
<keyword id="KW-0997">Cell inner membrane</keyword>
<keyword id="KW-1003">Cell membrane</keyword>
<keyword id="KW-0378">Hydrolase</keyword>
<keyword id="KW-0472">Membrane</keyword>
<keyword id="KW-0479">Metal-binding</keyword>
<keyword id="KW-0482">Metalloprotease</keyword>
<keyword id="KW-0645">Protease</keyword>
<keyword id="KW-1185">Reference proteome</keyword>
<keyword id="KW-0812">Transmembrane</keyword>
<keyword id="KW-1133">Transmembrane helix</keyword>
<keyword id="KW-0862">Zinc</keyword>
<organism>
    <name type="scientific">Escherichia coli O139:H28 (strain E24377A / ETEC)</name>
    <dbReference type="NCBI Taxonomy" id="331111"/>
    <lineage>
        <taxon>Bacteria</taxon>
        <taxon>Pseudomonadati</taxon>
        <taxon>Pseudomonadota</taxon>
        <taxon>Gammaproteobacteria</taxon>
        <taxon>Enterobacterales</taxon>
        <taxon>Enterobacteriaceae</taxon>
        <taxon>Escherichia</taxon>
    </lineage>
</organism>
<accession>A7ZMV2</accession>
<evidence type="ECO:0000255" key="1">
    <source>
        <dbReference type="HAMAP-Rule" id="MF_00188"/>
    </source>
</evidence>